<feature type="chain" id="PRO_1000076136" description="Glutamyl-tRNA(Gln) amidotransferase subunit A">
    <location>
        <begin position="1"/>
        <end position="481"/>
    </location>
</feature>
<feature type="active site" description="Charge relay system" evidence="1">
    <location>
        <position position="76"/>
    </location>
</feature>
<feature type="active site" description="Charge relay system" evidence="1">
    <location>
        <position position="151"/>
    </location>
</feature>
<feature type="active site" description="Acyl-ester intermediate" evidence="1">
    <location>
        <position position="175"/>
    </location>
</feature>
<accession>A9M003</accession>
<proteinExistence type="inferred from homology"/>
<keyword id="KW-0067">ATP-binding</keyword>
<keyword id="KW-0436">Ligase</keyword>
<keyword id="KW-0547">Nucleotide-binding</keyword>
<keyword id="KW-0648">Protein biosynthesis</keyword>
<name>GATA_NEIM0</name>
<gene>
    <name evidence="1" type="primary">gatA</name>
    <name type="ordered locus">NMCC_1267</name>
</gene>
<protein>
    <recommendedName>
        <fullName evidence="1">Glutamyl-tRNA(Gln) amidotransferase subunit A</fullName>
        <shortName evidence="1">Glu-ADT subunit A</shortName>
        <ecNumber evidence="1">6.3.5.7</ecNumber>
    </recommendedName>
</protein>
<evidence type="ECO:0000255" key="1">
    <source>
        <dbReference type="HAMAP-Rule" id="MF_00120"/>
    </source>
</evidence>
<sequence>MTQYTLKQASVLLQSKQISAVELASAYLAAIAEKNPALNGYITIDQDKTLAEARAADERIAQGNASALTGIPVAYKDIFCQTGWRSACASKMLDNFISSYTATVVQNLLDEGMVTLGRTNMDEFAMGSTNENSFYGATKNPWNPEHVPGGSSGGSAAVVAARLAPAALGSDTGGSIRQPASHCGITGIKPTYGTVSRFGMVAYASSFDQAGPMAQTAEDCAILLNAMAGFDPKDSTSLEREKEDYTRDLNQPLKGLKIGLPKEYFGEGNSADVLTALQNTIDLLKAQGAELIEVSLPQTKLSIPAYYVLASAEASTNLSRYDGVRYGHRAAQFGDLEEMYGKTRAEGFGSEVKRRIMIGTYVLSHGYYDAYYLKAQKLRRLVADDFQTVFARCDLILAPTAPTAAPKIGADSSPVETYLSDIYTIAVNLAGLPALTLPAGFSGGGLPVGVQLIGNYFAEARILGAAHQIQLNSDWHGKRPE</sequence>
<organism>
    <name type="scientific">Neisseria meningitidis serogroup C (strain 053442)</name>
    <dbReference type="NCBI Taxonomy" id="374833"/>
    <lineage>
        <taxon>Bacteria</taxon>
        <taxon>Pseudomonadati</taxon>
        <taxon>Pseudomonadota</taxon>
        <taxon>Betaproteobacteria</taxon>
        <taxon>Neisseriales</taxon>
        <taxon>Neisseriaceae</taxon>
        <taxon>Neisseria</taxon>
    </lineage>
</organism>
<reference key="1">
    <citation type="journal article" date="2008" name="Genomics">
        <title>Characterization of ST-4821 complex, a unique Neisseria meningitidis clone.</title>
        <authorList>
            <person name="Peng J."/>
            <person name="Yang L."/>
            <person name="Yang F."/>
            <person name="Yang J."/>
            <person name="Yan Y."/>
            <person name="Nie H."/>
            <person name="Zhang X."/>
            <person name="Xiong Z."/>
            <person name="Jiang Y."/>
            <person name="Cheng F."/>
            <person name="Xu X."/>
            <person name="Chen S."/>
            <person name="Sun L."/>
            <person name="Li W."/>
            <person name="Shen Y."/>
            <person name="Shao Z."/>
            <person name="Liang X."/>
            <person name="Xu J."/>
            <person name="Jin Q."/>
        </authorList>
    </citation>
    <scope>NUCLEOTIDE SEQUENCE [LARGE SCALE GENOMIC DNA]</scope>
    <source>
        <strain>053442</strain>
    </source>
</reference>
<comment type="function">
    <text evidence="1">Allows the formation of correctly charged Gln-tRNA(Gln) through the transamidation of misacylated Glu-tRNA(Gln) in organisms which lack glutaminyl-tRNA synthetase. The reaction takes place in the presence of glutamine and ATP through an activated gamma-phospho-Glu-tRNA(Gln).</text>
</comment>
<comment type="catalytic activity">
    <reaction evidence="1">
        <text>L-glutamyl-tRNA(Gln) + L-glutamine + ATP + H2O = L-glutaminyl-tRNA(Gln) + L-glutamate + ADP + phosphate + H(+)</text>
        <dbReference type="Rhea" id="RHEA:17521"/>
        <dbReference type="Rhea" id="RHEA-COMP:9681"/>
        <dbReference type="Rhea" id="RHEA-COMP:9684"/>
        <dbReference type="ChEBI" id="CHEBI:15377"/>
        <dbReference type="ChEBI" id="CHEBI:15378"/>
        <dbReference type="ChEBI" id="CHEBI:29985"/>
        <dbReference type="ChEBI" id="CHEBI:30616"/>
        <dbReference type="ChEBI" id="CHEBI:43474"/>
        <dbReference type="ChEBI" id="CHEBI:58359"/>
        <dbReference type="ChEBI" id="CHEBI:78520"/>
        <dbReference type="ChEBI" id="CHEBI:78521"/>
        <dbReference type="ChEBI" id="CHEBI:456216"/>
        <dbReference type="EC" id="6.3.5.7"/>
    </reaction>
</comment>
<comment type="subunit">
    <text evidence="1">Heterotrimer of A, B and C subunits.</text>
</comment>
<comment type="similarity">
    <text evidence="1">Belongs to the amidase family. GatA subfamily.</text>
</comment>
<dbReference type="EC" id="6.3.5.7" evidence="1"/>
<dbReference type="EMBL" id="CP000381">
    <property type="protein sequence ID" value="ABX73439.1"/>
    <property type="molecule type" value="Genomic_DNA"/>
</dbReference>
<dbReference type="RefSeq" id="WP_012221759.1">
    <property type="nucleotide sequence ID" value="NC_010120.1"/>
</dbReference>
<dbReference type="SMR" id="A9M003"/>
<dbReference type="KEGG" id="nmn:NMCC_1267"/>
<dbReference type="HOGENOM" id="CLU_009600_0_3_4"/>
<dbReference type="Proteomes" id="UP000001177">
    <property type="component" value="Chromosome"/>
</dbReference>
<dbReference type="GO" id="GO:0030956">
    <property type="term" value="C:glutamyl-tRNA(Gln) amidotransferase complex"/>
    <property type="evidence" value="ECO:0007669"/>
    <property type="project" value="InterPro"/>
</dbReference>
<dbReference type="GO" id="GO:0005524">
    <property type="term" value="F:ATP binding"/>
    <property type="evidence" value="ECO:0007669"/>
    <property type="project" value="UniProtKB-KW"/>
</dbReference>
<dbReference type="GO" id="GO:0050567">
    <property type="term" value="F:glutaminyl-tRNA synthase (glutamine-hydrolyzing) activity"/>
    <property type="evidence" value="ECO:0007669"/>
    <property type="project" value="UniProtKB-UniRule"/>
</dbReference>
<dbReference type="GO" id="GO:0006412">
    <property type="term" value="P:translation"/>
    <property type="evidence" value="ECO:0007669"/>
    <property type="project" value="UniProtKB-UniRule"/>
</dbReference>
<dbReference type="Gene3D" id="3.90.1300.10">
    <property type="entry name" value="Amidase signature (AS) domain"/>
    <property type="match status" value="1"/>
</dbReference>
<dbReference type="HAMAP" id="MF_00120">
    <property type="entry name" value="GatA"/>
    <property type="match status" value="1"/>
</dbReference>
<dbReference type="InterPro" id="IPR000120">
    <property type="entry name" value="Amidase"/>
</dbReference>
<dbReference type="InterPro" id="IPR020556">
    <property type="entry name" value="Amidase_CS"/>
</dbReference>
<dbReference type="InterPro" id="IPR023631">
    <property type="entry name" value="Amidase_dom"/>
</dbReference>
<dbReference type="InterPro" id="IPR036928">
    <property type="entry name" value="AS_sf"/>
</dbReference>
<dbReference type="InterPro" id="IPR004412">
    <property type="entry name" value="GatA"/>
</dbReference>
<dbReference type="NCBIfam" id="TIGR00132">
    <property type="entry name" value="gatA"/>
    <property type="match status" value="1"/>
</dbReference>
<dbReference type="PANTHER" id="PTHR11895:SF151">
    <property type="entry name" value="GLUTAMYL-TRNA(GLN) AMIDOTRANSFERASE SUBUNIT A"/>
    <property type="match status" value="1"/>
</dbReference>
<dbReference type="PANTHER" id="PTHR11895">
    <property type="entry name" value="TRANSAMIDASE"/>
    <property type="match status" value="1"/>
</dbReference>
<dbReference type="Pfam" id="PF01425">
    <property type="entry name" value="Amidase"/>
    <property type="match status" value="1"/>
</dbReference>
<dbReference type="SUPFAM" id="SSF75304">
    <property type="entry name" value="Amidase signature (AS) enzymes"/>
    <property type="match status" value="1"/>
</dbReference>
<dbReference type="PROSITE" id="PS00571">
    <property type="entry name" value="AMIDASES"/>
    <property type="match status" value="1"/>
</dbReference>